<comment type="function">
    <text evidence="1">Binds directly to 23S rRNA. The L1 stalk is quite mobile in the ribosome, and is involved in E site tRNA release.</text>
</comment>
<comment type="function">
    <text evidence="1">Protein L1 is also a translational repressor protein, it controls the translation of the L11 operon by binding to its mRNA.</text>
</comment>
<comment type="subunit">
    <text evidence="1">Part of the 50S ribosomal subunit.</text>
</comment>
<comment type="similarity">
    <text evidence="1">Belongs to the universal ribosomal protein uL1 family.</text>
</comment>
<evidence type="ECO:0000255" key="1">
    <source>
        <dbReference type="HAMAP-Rule" id="MF_01318"/>
    </source>
</evidence>
<evidence type="ECO:0000305" key="2"/>
<protein>
    <recommendedName>
        <fullName evidence="1">Large ribosomal subunit protein uL1</fullName>
    </recommendedName>
    <alternativeName>
        <fullName evidence="2">50S ribosomal protein L1</fullName>
    </alternativeName>
</protein>
<accession>A5WH38</accession>
<gene>
    <name evidence="1" type="primary">rplA</name>
    <name type="ordered locus">PsycPRwf_2039</name>
</gene>
<organism>
    <name type="scientific">Psychrobacter sp. (strain PRwf-1)</name>
    <dbReference type="NCBI Taxonomy" id="349106"/>
    <lineage>
        <taxon>Bacteria</taxon>
        <taxon>Pseudomonadati</taxon>
        <taxon>Pseudomonadota</taxon>
        <taxon>Gammaproteobacteria</taxon>
        <taxon>Moraxellales</taxon>
        <taxon>Moraxellaceae</taxon>
        <taxon>Psychrobacter</taxon>
    </lineage>
</organism>
<proteinExistence type="inferred from homology"/>
<sequence length="233" mass="24565">MSKLTKRQKMIAERVESQKLYTLEEAVSILNDLPPLKFKESVDIAINLGVDPRKSDQVVRGATNLPAGTGKTKRVAVFAQGAAADAAKEAGADVVGMDDLAEQVKAGNLDFDVVIAAPDAMRVVGQLGTILGPRGLMPNPKVGTVTPNVAEAVANAKAGQATYRVDKAGIIHTTIGQVGFTVEQIQQNVQALLADIRRAKPATSKGIYIKKITLSSTMGPGIALDPLPYRVAK</sequence>
<keyword id="KW-0678">Repressor</keyword>
<keyword id="KW-0687">Ribonucleoprotein</keyword>
<keyword id="KW-0689">Ribosomal protein</keyword>
<keyword id="KW-0694">RNA-binding</keyword>
<keyword id="KW-0699">rRNA-binding</keyword>
<keyword id="KW-0810">Translation regulation</keyword>
<keyword id="KW-0820">tRNA-binding</keyword>
<reference key="1">
    <citation type="submission" date="2007-05" db="EMBL/GenBank/DDBJ databases">
        <title>Complete sequence of chromosome of Psychrobacter sp. PRwf-1.</title>
        <authorList>
            <consortium name="US DOE Joint Genome Institute"/>
            <person name="Copeland A."/>
            <person name="Lucas S."/>
            <person name="Lapidus A."/>
            <person name="Barry K."/>
            <person name="Detter J.C."/>
            <person name="Glavina del Rio T."/>
            <person name="Hammon N."/>
            <person name="Israni S."/>
            <person name="Dalin E."/>
            <person name="Tice H."/>
            <person name="Pitluck S."/>
            <person name="Chain P."/>
            <person name="Malfatti S."/>
            <person name="Shin M."/>
            <person name="Vergez L."/>
            <person name="Schmutz J."/>
            <person name="Larimer F."/>
            <person name="Land M."/>
            <person name="Hauser L."/>
            <person name="Kyrpides N."/>
            <person name="Kim E."/>
            <person name="Tiedje J."/>
            <person name="Richardson P."/>
        </authorList>
    </citation>
    <scope>NUCLEOTIDE SEQUENCE [LARGE SCALE GENOMIC DNA]</scope>
    <source>
        <strain>PRwf-1</strain>
    </source>
</reference>
<name>RL1_PSYWF</name>
<dbReference type="EMBL" id="CP000713">
    <property type="protein sequence ID" value="ABQ94979.1"/>
    <property type="molecule type" value="Genomic_DNA"/>
</dbReference>
<dbReference type="SMR" id="A5WH38"/>
<dbReference type="STRING" id="349106.PsycPRwf_2039"/>
<dbReference type="KEGG" id="prw:PsycPRwf_2039"/>
<dbReference type="eggNOG" id="COG0081">
    <property type="taxonomic scope" value="Bacteria"/>
</dbReference>
<dbReference type="HOGENOM" id="CLU_062853_0_0_6"/>
<dbReference type="GO" id="GO:0022625">
    <property type="term" value="C:cytosolic large ribosomal subunit"/>
    <property type="evidence" value="ECO:0007669"/>
    <property type="project" value="TreeGrafter"/>
</dbReference>
<dbReference type="GO" id="GO:0019843">
    <property type="term" value="F:rRNA binding"/>
    <property type="evidence" value="ECO:0007669"/>
    <property type="project" value="UniProtKB-UniRule"/>
</dbReference>
<dbReference type="GO" id="GO:0003735">
    <property type="term" value="F:structural constituent of ribosome"/>
    <property type="evidence" value="ECO:0007669"/>
    <property type="project" value="InterPro"/>
</dbReference>
<dbReference type="GO" id="GO:0000049">
    <property type="term" value="F:tRNA binding"/>
    <property type="evidence" value="ECO:0007669"/>
    <property type="project" value="UniProtKB-KW"/>
</dbReference>
<dbReference type="GO" id="GO:0006417">
    <property type="term" value="P:regulation of translation"/>
    <property type="evidence" value="ECO:0007669"/>
    <property type="project" value="UniProtKB-KW"/>
</dbReference>
<dbReference type="GO" id="GO:0006412">
    <property type="term" value="P:translation"/>
    <property type="evidence" value="ECO:0007669"/>
    <property type="project" value="UniProtKB-UniRule"/>
</dbReference>
<dbReference type="CDD" id="cd00403">
    <property type="entry name" value="Ribosomal_L1"/>
    <property type="match status" value="1"/>
</dbReference>
<dbReference type="FunFam" id="3.40.50.790:FF:000001">
    <property type="entry name" value="50S ribosomal protein L1"/>
    <property type="match status" value="1"/>
</dbReference>
<dbReference type="Gene3D" id="3.30.190.20">
    <property type="match status" value="1"/>
</dbReference>
<dbReference type="Gene3D" id="3.40.50.790">
    <property type="match status" value="1"/>
</dbReference>
<dbReference type="HAMAP" id="MF_01318_B">
    <property type="entry name" value="Ribosomal_uL1_B"/>
    <property type="match status" value="1"/>
</dbReference>
<dbReference type="InterPro" id="IPR005878">
    <property type="entry name" value="Ribosom_uL1_bac-type"/>
</dbReference>
<dbReference type="InterPro" id="IPR002143">
    <property type="entry name" value="Ribosomal_uL1"/>
</dbReference>
<dbReference type="InterPro" id="IPR023674">
    <property type="entry name" value="Ribosomal_uL1-like"/>
</dbReference>
<dbReference type="InterPro" id="IPR028364">
    <property type="entry name" value="Ribosomal_uL1/biogenesis"/>
</dbReference>
<dbReference type="InterPro" id="IPR016095">
    <property type="entry name" value="Ribosomal_uL1_3-a/b-sand"/>
</dbReference>
<dbReference type="InterPro" id="IPR023673">
    <property type="entry name" value="Ribosomal_uL1_CS"/>
</dbReference>
<dbReference type="NCBIfam" id="TIGR01169">
    <property type="entry name" value="rplA_bact"/>
    <property type="match status" value="1"/>
</dbReference>
<dbReference type="PANTHER" id="PTHR36427">
    <property type="entry name" value="54S RIBOSOMAL PROTEIN L1, MITOCHONDRIAL"/>
    <property type="match status" value="1"/>
</dbReference>
<dbReference type="PANTHER" id="PTHR36427:SF3">
    <property type="entry name" value="LARGE RIBOSOMAL SUBUNIT PROTEIN UL1M"/>
    <property type="match status" value="1"/>
</dbReference>
<dbReference type="Pfam" id="PF00687">
    <property type="entry name" value="Ribosomal_L1"/>
    <property type="match status" value="1"/>
</dbReference>
<dbReference type="PIRSF" id="PIRSF002155">
    <property type="entry name" value="Ribosomal_L1"/>
    <property type="match status" value="1"/>
</dbReference>
<dbReference type="SUPFAM" id="SSF56808">
    <property type="entry name" value="Ribosomal protein L1"/>
    <property type="match status" value="1"/>
</dbReference>
<dbReference type="PROSITE" id="PS01199">
    <property type="entry name" value="RIBOSOMAL_L1"/>
    <property type="match status" value="1"/>
</dbReference>
<feature type="chain" id="PRO_1000073222" description="Large ribosomal subunit protein uL1">
    <location>
        <begin position="1"/>
        <end position="233"/>
    </location>
</feature>